<evidence type="ECO:0000255" key="1">
    <source>
        <dbReference type="HAMAP-Rule" id="MF_00116"/>
    </source>
</evidence>
<comment type="function">
    <text evidence="1">This enzyme is involved in nucleotide metabolism: it produces dUMP, the immediate precursor of thymidine nucleotides and it decreases the intracellular concentration of dUTP so that uracil cannot be incorporated into DNA.</text>
</comment>
<comment type="catalytic activity">
    <reaction evidence="1">
        <text>dUTP + H2O = dUMP + diphosphate + H(+)</text>
        <dbReference type="Rhea" id="RHEA:10248"/>
        <dbReference type="ChEBI" id="CHEBI:15377"/>
        <dbReference type="ChEBI" id="CHEBI:15378"/>
        <dbReference type="ChEBI" id="CHEBI:33019"/>
        <dbReference type="ChEBI" id="CHEBI:61555"/>
        <dbReference type="ChEBI" id="CHEBI:246422"/>
        <dbReference type="EC" id="3.6.1.23"/>
    </reaction>
</comment>
<comment type="cofactor">
    <cofactor evidence="1">
        <name>Mg(2+)</name>
        <dbReference type="ChEBI" id="CHEBI:18420"/>
    </cofactor>
</comment>
<comment type="pathway">
    <text evidence="1">Pyrimidine metabolism; dUMP biosynthesis; dUMP from dCTP (dUTP route): step 2/2.</text>
</comment>
<comment type="similarity">
    <text evidence="1">Belongs to the dUTPase family.</text>
</comment>
<organism>
    <name type="scientific">Pectobacterium carotovorum subsp. carotovorum (strain PC1)</name>
    <dbReference type="NCBI Taxonomy" id="561230"/>
    <lineage>
        <taxon>Bacteria</taxon>
        <taxon>Pseudomonadati</taxon>
        <taxon>Pseudomonadota</taxon>
        <taxon>Gammaproteobacteria</taxon>
        <taxon>Enterobacterales</taxon>
        <taxon>Pectobacteriaceae</taxon>
        <taxon>Pectobacterium</taxon>
    </lineage>
</organism>
<feature type="chain" id="PRO_1000202986" description="Deoxyuridine 5'-triphosphate nucleotidohydrolase">
    <location>
        <begin position="1"/>
        <end position="152"/>
    </location>
</feature>
<feature type="binding site" evidence="1">
    <location>
        <begin position="71"/>
        <end position="73"/>
    </location>
    <ligand>
        <name>substrate</name>
    </ligand>
</feature>
<feature type="binding site" evidence="1">
    <location>
        <position position="84"/>
    </location>
    <ligand>
        <name>substrate</name>
    </ligand>
</feature>
<feature type="binding site" evidence="1">
    <location>
        <begin position="88"/>
        <end position="90"/>
    </location>
    <ligand>
        <name>substrate</name>
    </ligand>
</feature>
<feature type="binding site" evidence="1">
    <location>
        <position position="98"/>
    </location>
    <ligand>
        <name>substrate</name>
    </ligand>
</feature>
<name>DUT_PECCP</name>
<protein>
    <recommendedName>
        <fullName evidence="1">Deoxyuridine 5'-triphosphate nucleotidohydrolase</fullName>
        <shortName evidence="1">dUTPase</shortName>
        <ecNumber evidence="1">3.6.1.23</ecNumber>
    </recommendedName>
    <alternativeName>
        <fullName evidence="1">dUTP pyrophosphatase</fullName>
    </alternativeName>
</protein>
<accession>C6DIC3</accession>
<sequence>MMKKIDVKIVDPRVGQQFPLPTYATPGSAGLDLRACLDQAIELKAGETTLIPTGLAIHIADTGLAAVILPRSGLGHKHGVVLGNLVGLIDSDYQGQLMVSVWNRGQQTFTVEPGERIAQMVFVPVVQAEFNLVEDFVSSERGEGGFGHSGRS</sequence>
<reference key="1">
    <citation type="submission" date="2009-07" db="EMBL/GenBank/DDBJ databases">
        <title>Complete sequence of Pectobacterium carotovorum subsp. carotovorum PC1.</title>
        <authorList>
            <consortium name="US DOE Joint Genome Institute"/>
            <person name="Lucas S."/>
            <person name="Copeland A."/>
            <person name="Lapidus A."/>
            <person name="Glavina del Rio T."/>
            <person name="Tice H."/>
            <person name="Bruce D."/>
            <person name="Goodwin L."/>
            <person name="Pitluck S."/>
            <person name="Munk A.C."/>
            <person name="Brettin T."/>
            <person name="Detter J.C."/>
            <person name="Han C."/>
            <person name="Tapia R."/>
            <person name="Larimer F."/>
            <person name="Land M."/>
            <person name="Hauser L."/>
            <person name="Kyrpides N."/>
            <person name="Mikhailova N."/>
            <person name="Balakrishnan V."/>
            <person name="Glasner J."/>
            <person name="Perna N.T."/>
        </authorList>
    </citation>
    <scope>NUCLEOTIDE SEQUENCE [LARGE SCALE GENOMIC DNA]</scope>
    <source>
        <strain>PC1</strain>
    </source>
</reference>
<gene>
    <name evidence="1" type="primary">dut</name>
    <name type="ordered locus">PC1_4102</name>
</gene>
<dbReference type="EC" id="3.6.1.23" evidence="1"/>
<dbReference type="EMBL" id="CP001657">
    <property type="protein sequence ID" value="ACT15117.1"/>
    <property type="molecule type" value="Genomic_DNA"/>
</dbReference>
<dbReference type="RefSeq" id="WP_015842191.1">
    <property type="nucleotide sequence ID" value="NC_012917.1"/>
</dbReference>
<dbReference type="SMR" id="C6DIC3"/>
<dbReference type="STRING" id="561230.PC1_4102"/>
<dbReference type="GeneID" id="67796090"/>
<dbReference type="KEGG" id="pct:PC1_4102"/>
<dbReference type="eggNOG" id="COG0756">
    <property type="taxonomic scope" value="Bacteria"/>
</dbReference>
<dbReference type="HOGENOM" id="CLU_068508_1_1_6"/>
<dbReference type="UniPathway" id="UPA00610">
    <property type="reaction ID" value="UER00666"/>
</dbReference>
<dbReference type="Proteomes" id="UP000002736">
    <property type="component" value="Chromosome"/>
</dbReference>
<dbReference type="GO" id="GO:0004170">
    <property type="term" value="F:dUTP diphosphatase activity"/>
    <property type="evidence" value="ECO:0007669"/>
    <property type="project" value="UniProtKB-UniRule"/>
</dbReference>
<dbReference type="GO" id="GO:0000287">
    <property type="term" value="F:magnesium ion binding"/>
    <property type="evidence" value="ECO:0007669"/>
    <property type="project" value="UniProtKB-UniRule"/>
</dbReference>
<dbReference type="GO" id="GO:0006226">
    <property type="term" value="P:dUMP biosynthetic process"/>
    <property type="evidence" value="ECO:0007669"/>
    <property type="project" value="UniProtKB-UniRule"/>
</dbReference>
<dbReference type="GO" id="GO:0046081">
    <property type="term" value="P:dUTP catabolic process"/>
    <property type="evidence" value="ECO:0007669"/>
    <property type="project" value="InterPro"/>
</dbReference>
<dbReference type="CDD" id="cd07557">
    <property type="entry name" value="trimeric_dUTPase"/>
    <property type="match status" value="1"/>
</dbReference>
<dbReference type="FunFam" id="2.70.40.10:FF:000002">
    <property type="entry name" value="dUTP diphosphatase"/>
    <property type="match status" value="1"/>
</dbReference>
<dbReference type="Gene3D" id="2.70.40.10">
    <property type="match status" value="1"/>
</dbReference>
<dbReference type="HAMAP" id="MF_00116">
    <property type="entry name" value="dUTPase_bact"/>
    <property type="match status" value="1"/>
</dbReference>
<dbReference type="InterPro" id="IPR008181">
    <property type="entry name" value="dUTPase"/>
</dbReference>
<dbReference type="InterPro" id="IPR029054">
    <property type="entry name" value="dUTPase-like"/>
</dbReference>
<dbReference type="InterPro" id="IPR036157">
    <property type="entry name" value="dUTPase-like_sf"/>
</dbReference>
<dbReference type="InterPro" id="IPR033704">
    <property type="entry name" value="dUTPase_trimeric"/>
</dbReference>
<dbReference type="NCBIfam" id="TIGR00576">
    <property type="entry name" value="dut"/>
    <property type="match status" value="1"/>
</dbReference>
<dbReference type="NCBIfam" id="NF001862">
    <property type="entry name" value="PRK00601.1"/>
    <property type="match status" value="1"/>
</dbReference>
<dbReference type="PANTHER" id="PTHR11241">
    <property type="entry name" value="DEOXYURIDINE 5'-TRIPHOSPHATE NUCLEOTIDOHYDROLASE"/>
    <property type="match status" value="1"/>
</dbReference>
<dbReference type="PANTHER" id="PTHR11241:SF0">
    <property type="entry name" value="DEOXYURIDINE 5'-TRIPHOSPHATE NUCLEOTIDOHYDROLASE"/>
    <property type="match status" value="1"/>
</dbReference>
<dbReference type="Pfam" id="PF00692">
    <property type="entry name" value="dUTPase"/>
    <property type="match status" value="1"/>
</dbReference>
<dbReference type="SUPFAM" id="SSF51283">
    <property type="entry name" value="dUTPase-like"/>
    <property type="match status" value="1"/>
</dbReference>
<proteinExistence type="inferred from homology"/>
<keyword id="KW-0378">Hydrolase</keyword>
<keyword id="KW-0460">Magnesium</keyword>
<keyword id="KW-0479">Metal-binding</keyword>
<keyword id="KW-0546">Nucleotide metabolism</keyword>